<reference key="1">
    <citation type="submission" date="2007-10" db="EMBL/GenBank/DDBJ databases">
        <title>Complete sequence of chromosome 1 of Burkholderia multivorans ATCC 17616.</title>
        <authorList>
            <person name="Copeland A."/>
            <person name="Lucas S."/>
            <person name="Lapidus A."/>
            <person name="Barry K."/>
            <person name="Glavina del Rio T."/>
            <person name="Dalin E."/>
            <person name="Tice H."/>
            <person name="Pitluck S."/>
            <person name="Chain P."/>
            <person name="Malfatti S."/>
            <person name="Shin M."/>
            <person name="Vergez L."/>
            <person name="Schmutz J."/>
            <person name="Larimer F."/>
            <person name="Land M."/>
            <person name="Hauser L."/>
            <person name="Kyrpides N."/>
            <person name="Kim E."/>
            <person name="Tiedje J."/>
            <person name="Richardson P."/>
        </authorList>
    </citation>
    <scope>NUCLEOTIDE SEQUENCE [LARGE SCALE GENOMIC DNA]</scope>
    <source>
        <strain>ATCC 17616 / 249</strain>
    </source>
</reference>
<reference key="2">
    <citation type="submission" date="2007-04" db="EMBL/GenBank/DDBJ databases">
        <title>Complete genome sequence of Burkholderia multivorans ATCC 17616.</title>
        <authorList>
            <person name="Ohtsubo Y."/>
            <person name="Yamashita A."/>
            <person name="Kurokawa K."/>
            <person name="Takami H."/>
            <person name="Yuhara S."/>
            <person name="Nishiyama E."/>
            <person name="Endo R."/>
            <person name="Miyazaki R."/>
            <person name="Ono A."/>
            <person name="Yano K."/>
            <person name="Ito M."/>
            <person name="Sota M."/>
            <person name="Yuji N."/>
            <person name="Hattori M."/>
            <person name="Tsuda M."/>
        </authorList>
    </citation>
    <scope>NUCLEOTIDE SEQUENCE [LARGE SCALE GENOMIC DNA]</scope>
    <source>
        <strain>ATCC 17616 / 249</strain>
    </source>
</reference>
<sequence>MAGHSKWANIKHKKAAADAKRGKIWTRLIKEIQVAARLGGGDVSSNPRLRLAVDKAADANMPKDNVKRAIDRGVGGADGANYEEIRYEGYGIGGAAIIVDTLTDNRTRTVAEVRHAFSKFGGNMGTDGSVAFMFDHVGQFLFAPGTSEDALMEAALEAGADDVSTNEDGSIEVLCDWQEFSKVKDALEAAGFKAELAEVTMKPQNEVEFTGDDAVKMQKLLDALENLDDVQEVYTNAVIVEE</sequence>
<name>Y2280_BURM1</name>
<organism>
    <name type="scientific">Burkholderia multivorans (strain ATCC 17616 / 249)</name>
    <dbReference type="NCBI Taxonomy" id="395019"/>
    <lineage>
        <taxon>Bacteria</taxon>
        <taxon>Pseudomonadati</taxon>
        <taxon>Pseudomonadota</taxon>
        <taxon>Betaproteobacteria</taxon>
        <taxon>Burkholderiales</taxon>
        <taxon>Burkholderiaceae</taxon>
        <taxon>Burkholderia</taxon>
        <taxon>Burkholderia cepacia complex</taxon>
    </lineage>
</organism>
<feature type="chain" id="PRO_1000132165" description="Probable transcriptional regulatory protein Bmul_0984/BMULJ_02280">
    <location>
        <begin position="1"/>
        <end position="242"/>
    </location>
</feature>
<dbReference type="EMBL" id="CP000868">
    <property type="protein sequence ID" value="ABX14675.1"/>
    <property type="molecule type" value="Genomic_DNA"/>
</dbReference>
<dbReference type="EMBL" id="AP009385">
    <property type="protein sequence ID" value="BAG44175.1"/>
    <property type="molecule type" value="Genomic_DNA"/>
</dbReference>
<dbReference type="RefSeq" id="WP_006398745.1">
    <property type="nucleotide sequence ID" value="NC_010804.1"/>
</dbReference>
<dbReference type="SMR" id="A9AJK0"/>
<dbReference type="STRING" id="395019.BMULJ_02280"/>
<dbReference type="KEGG" id="bmj:BMULJ_02280"/>
<dbReference type="KEGG" id="bmu:Bmul_0984"/>
<dbReference type="eggNOG" id="COG0217">
    <property type="taxonomic scope" value="Bacteria"/>
</dbReference>
<dbReference type="HOGENOM" id="CLU_062974_2_2_4"/>
<dbReference type="Proteomes" id="UP000008815">
    <property type="component" value="Chromosome 1"/>
</dbReference>
<dbReference type="GO" id="GO:0005829">
    <property type="term" value="C:cytosol"/>
    <property type="evidence" value="ECO:0007669"/>
    <property type="project" value="TreeGrafter"/>
</dbReference>
<dbReference type="GO" id="GO:0003677">
    <property type="term" value="F:DNA binding"/>
    <property type="evidence" value="ECO:0007669"/>
    <property type="project" value="UniProtKB-UniRule"/>
</dbReference>
<dbReference type="GO" id="GO:0006355">
    <property type="term" value="P:regulation of DNA-templated transcription"/>
    <property type="evidence" value="ECO:0007669"/>
    <property type="project" value="UniProtKB-UniRule"/>
</dbReference>
<dbReference type="FunFam" id="1.10.10.200:FF:000001">
    <property type="entry name" value="Probable transcriptional regulatory protein YebC"/>
    <property type="match status" value="1"/>
</dbReference>
<dbReference type="FunFam" id="3.30.70.980:FF:000002">
    <property type="entry name" value="Probable transcriptional regulatory protein YebC"/>
    <property type="match status" value="1"/>
</dbReference>
<dbReference type="Gene3D" id="1.10.10.200">
    <property type="match status" value="1"/>
</dbReference>
<dbReference type="Gene3D" id="3.30.70.980">
    <property type="match status" value="2"/>
</dbReference>
<dbReference type="HAMAP" id="MF_00693">
    <property type="entry name" value="Transcrip_reg_TACO1"/>
    <property type="match status" value="1"/>
</dbReference>
<dbReference type="InterPro" id="IPR017856">
    <property type="entry name" value="Integrase-like_N"/>
</dbReference>
<dbReference type="InterPro" id="IPR048300">
    <property type="entry name" value="TACO1_YebC-like_2nd/3rd_dom"/>
</dbReference>
<dbReference type="InterPro" id="IPR049083">
    <property type="entry name" value="TACO1_YebC_N"/>
</dbReference>
<dbReference type="InterPro" id="IPR002876">
    <property type="entry name" value="Transcrip_reg_TACO1-like"/>
</dbReference>
<dbReference type="InterPro" id="IPR026564">
    <property type="entry name" value="Transcrip_reg_TACO1-like_dom3"/>
</dbReference>
<dbReference type="InterPro" id="IPR029072">
    <property type="entry name" value="YebC-like"/>
</dbReference>
<dbReference type="NCBIfam" id="NF001030">
    <property type="entry name" value="PRK00110.1"/>
    <property type="match status" value="1"/>
</dbReference>
<dbReference type="NCBIfam" id="NF009044">
    <property type="entry name" value="PRK12378.1"/>
    <property type="match status" value="1"/>
</dbReference>
<dbReference type="NCBIfam" id="TIGR01033">
    <property type="entry name" value="YebC/PmpR family DNA-binding transcriptional regulator"/>
    <property type="match status" value="1"/>
</dbReference>
<dbReference type="PANTHER" id="PTHR12532:SF6">
    <property type="entry name" value="TRANSCRIPTIONAL REGULATORY PROTEIN YEBC-RELATED"/>
    <property type="match status" value="1"/>
</dbReference>
<dbReference type="PANTHER" id="PTHR12532">
    <property type="entry name" value="TRANSLATIONAL ACTIVATOR OF CYTOCHROME C OXIDASE 1"/>
    <property type="match status" value="1"/>
</dbReference>
<dbReference type="Pfam" id="PF20772">
    <property type="entry name" value="TACO1_YebC_N"/>
    <property type="match status" value="1"/>
</dbReference>
<dbReference type="Pfam" id="PF01709">
    <property type="entry name" value="Transcrip_reg"/>
    <property type="match status" value="1"/>
</dbReference>
<dbReference type="SUPFAM" id="SSF75625">
    <property type="entry name" value="YebC-like"/>
    <property type="match status" value="1"/>
</dbReference>
<proteinExistence type="inferred from homology"/>
<protein>
    <recommendedName>
        <fullName evidence="1">Probable transcriptional regulatory protein Bmul_0984/BMULJ_02280</fullName>
    </recommendedName>
</protein>
<gene>
    <name type="ordered locus">Bmul_0984</name>
    <name type="ordered locus">BMULJ_02280</name>
</gene>
<evidence type="ECO:0000255" key="1">
    <source>
        <dbReference type="HAMAP-Rule" id="MF_00693"/>
    </source>
</evidence>
<keyword id="KW-0963">Cytoplasm</keyword>
<keyword id="KW-0238">DNA-binding</keyword>
<keyword id="KW-1185">Reference proteome</keyword>
<keyword id="KW-0804">Transcription</keyword>
<keyword id="KW-0805">Transcription regulation</keyword>
<accession>A9AJK0</accession>
<comment type="subcellular location">
    <subcellularLocation>
        <location evidence="1">Cytoplasm</location>
    </subcellularLocation>
</comment>
<comment type="similarity">
    <text evidence="1">Belongs to the TACO1 family.</text>
</comment>